<sequence>MSATPSTLVWAAAADPDLHAFADDPFWLILLKAVAVFAFLLLMTLFAIVFERKVVAKMQQRVGPNRHGPRGWLQSLADGAKLMLKEDLIPVLADKPIFILAPIVSAVPAFLAFAVIPFGPEVSIFGERTTLQLADLPVSVLYLLAAASLGVYGLILSGWSSGSTYPLLGSLRSAAQIISYEVAMGLAFVAVFIYAGTLSTSGIVAGQSGRWYIVLVPSFVLYCISMVGETNRTPFDLPEAEGELVGGFHTEYSSIKFAFFFLAEYINMVTVSAIATTLFLGGWQPPPIPGLSGLNSGWVPLIWFVLKLLAFLFFFIWLRGTLPRLRYDQFMSFGWKVLIPVGLVWVLAVATFRVYQKHVDDRTPWLVGFGVVVGILLIVALIDPGGARHQRELEEAEQRKLAEAPSLDRIPWPPPPQAAGRGRPAVSAGASANGSSTVIPADPGPRQER</sequence>
<organism>
    <name type="scientific">Frankia casuarinae (strain DSM 45818 / CECT 9043 / HFP020203 / CcI3)</name>
    <dbReference type="NCBI Taxonomy" id="106370"/>
    <lineage>
        <taxon>Bacteria</taxon>
        <taxon>Bacillati</taxon>
        <taxon>Actinomycetota</taxon>
        <taxon>Actinomycetes</taxon>
        <taxon>Frankiales</taxon>
        <taxon>Frankiaceae</taxon>
        <taxon>Frankia</taxon>
    </lineage>
</organism>
<dbReference type="EC" id="7.1.1.-" evidence="1"/>
<dbReference type="EMBL" id="CP000249">
    <property type="protein sequence ID" value="ABD09929.1"/>
    <property type="molecule type" value="Genomic_DNA"/>
</dbReference>
<dbReference type="RefSeq" id="WP_011435005.1">
    <property type="nucleotide sequence ID" value="NZ_JENI01000032.1"/>
</dbReference>
<dbReference type="SMR" id="Q2JFL3"/>
<dbReference type="STRING" id="106370.Francci3_0545"/>
<dbReference type="KEGG" id="fra:Francci3_0545"/>
<dbReference type="eggNOG" id="COG1005">
    <property type="taxonomic scope" value="Bacteria"/>
</dbReference>
<dbReference type="HOGENOM" id="CLU_015134_0_0_11"/>
<dbReference type="OrthoDB" id="9803734at2"/>
<dbReference type="PhylomeDB" id="Q2JFL3"/>
<dbReference type="Proteomes" id="UP000001937">
    <property type="component" value="Chromosome"/>
</dbReference>
<dbReference type="GO" id="GO:0005886">
    <property type="term" value="C:plasma membrane"/>
    <property type="evidence" value="ECO:0007669"/>
    <property type="project" value="UniProtKB-SubCell"/>
</dbReference>
<dbReference type="GO" id="GO:0003954">
    <property type="term" value="F:NADH dehydrogenase activity"/>
    <property type="evidence" value="ECO:0007669"/>
    <property type="project" value="TreeGrafter"/>
</dbReference>
<dbReference type="GO" id="GO:0016655">
    <property type="term" value="F:oxidoreductase activity, acting on NAD(P)H, quinone or similar compound as acceptor"/>
    <property type="evidence" value="ECO:0007669"/>
    <property type="project" value="UniProtKB-UniRule"/>
</dbReference>
<dbReference type="GO" id="GO:0048038">
    <property type="term" value="F:quinone binding"/>
    <property type="evidence" value="ECO:0007669"/>
    <property type="project" value="UniProtKB-KW"/>
</dbReference>
<dbReference type="GO" id="GO:0009060">
    <property type="term" value="P:aerobic respiration"/>
    <property type="evidence" value="ECO:0007669"/>
    <property type="project" value="TreeGrafter"/>
</dbReference>
<dbReference type="HAMAP" id="MF_01350">
    <property type="entry name" value="NDH1_NuoH"/>
    <property type="match status" value="1"/>
</dbReference>
<dbReference type="InterPro" id="IPR001694">
    <property type="entry name" value="NADH_UbQ_OxRdtase_su1/FPO"/>
</dbReference>
<dbReference type="InterPro" id="IPR018086">
    <property type="entry name" value="NADH_UbQ_OxRdtase_su1_CS"/>
</dbReference>
<dbReference type="NCBIfam" id="NF004741">
    <property type="entry name" value="PRK06076.1-2"/>
    <property type="match status" value="1"/>
</dbReference>
<dbReference type="NCBIfam" id="NF004743">
    <property type="entry name" value="PRK06076.1-4"/>
    <property type="match status" value="1"/>
</dbReference>
<dbReference type="PANTHER" id="PTHR11432">
    <property type="entry name" value="NADH DEHYDROGENASE SUBUNIT 1"/>
    <property type="match status" value="1"/>
</dbReference>
<dbReference type="PANTHER" id="PTHR11432:SF3">
    <property type="entry name" value="NADH-UBIQUINONE OXIDOREDUCTASE CHAIN 1"/>
    <property type="match status" value="1"/>
</dbReference>
<dbReference type="Pfam" id="PF00146">
    <property type="entry name" value="NADHdh"/>
    <property type="match status" value="1"/>
</dbReference>
<dbReference type="PROSITE" id="PS00668">
    <property type="entry name" value="COMPLEX1_ND1_2"/>
    <property type="match status" value="1"/>
</dbReference>
<gene>
    <name evidence="1" type="primary">nuoH</name>
    <name type="ordered locus">Francci3_0545</name>
</gene>
<name>NUOH_FRACC</name>
<evidence type="ECO:0000255" key="1">
    <source>
        <dbReference type="HAMAP-Rule" id="MF_01350"/>
    </source>
</evidence>
<evidence type="ECO:0000256" key="2">
    <source>
        <dbReference type="SAM" id="MobiDB-lite"/>
    </source>
</evidence>
<protein>
    <recommendedName>
        <fullName evidence="1">NADH-quinone oxidoreductase subunit H</fullName>
        <ecNumber evidence="1">7.1.1.-</ecNumber>
    </recommendedName>
    <alternativeName>
        <fullName evidence="1">NADH dehydrogenase I subunit H</fullName>
    </alternativeName>
    <alternativeName>
        <fullName evidence="1">NDH-1 subunit H</fullName>
    </alternativeName>
</protein>
<keyword id="KW-1003">Cell membrane</keyword>
<keyword id="KW-0472">Membrane</keyword>
<keyword id="KW-0520">NAD</keyword>
<keyword id="KW-0874">Quinone</keyword>
<keyword id="KW-1185">Reference proteome</keyword>
<keyword id="KW-1278">Translocase</keyword>
<keyword id="KW-0812">Transmembrane</keyword>
<keyword id="KW-1133">Transmembrane helix</keyword>
<keyword id="KW-0830">Ubiquinone</keyword>
<feature type="chain" id="PRO_0000244919" description="NADH-quinone oxidoreductase subunit H">
    <location>
        <begin position="1"/>
        <end position="449"/>
    </location>
</feature>
<feature type="transmembrane region" description="Helical" evidence="1">
    <location>
        <begin position="29"/>
        <end position="49"/>
    </location>
</feature>
<feature type="transmembrane region" description="Helical" evidence="1">
    <location>
        <begin position="96"/>
        <end position="116"/>
    </location>
</feature>
<feature type="transmembrane region" description="Helical" evidence="1">
    <location>
        <begin position="136"/>
        <end position="156"/>
    </location>
</feature>
<feature type="transmembrane region" description="Helical" evidence="1">
    <location>
        <begin position="177"/>
        <end position="197"/>
    </location>
</feature>
<feature type="transmembrane region" description="Helical" evidence="1">
    <location>
        <begin position="211"/>
        <end position="231"/>
    </location>
</feature>
<feature type="transmembrane region" description="Helical" evidence="1">
    <location>
        <begin position="259"/>
        <end position="279"/>
    </location>
</feature>
<feature type="transmembrane region" description="Helical" evidence="1">
    <location>
        <begin position="298"/>
        <end position="318"/>
    </location>
</feature>
<feature type="transmembrane region" description="Helical" evidence="1">
    <location>
        <begin position="330"/>
        <end position="350"/>
    </location>
</feature>
<feature type="transmembrane region" description="Helical" evidence="1">
    <location>
        <begin position="365"/>
        <end position="385"/>
    </location>
</feature>
<feature type="region of interest" description="Disordered" evidence="2">
    <location>
        <begin position="393"/>
        <end position="449"/>
    </location>
</feature>
<feature type="compositionally biased region" description="Basic and acidic residues" evidence="2">
    <location>
        <begin position="393"/>
        <end position="402"/>
    </location>
</feature>
<feature type="compositionally biased region" description="Low complexity" evidence="2">
    <location>
        <begin position="418"/>
        <end position="436"/>
    </location>
</feature>
<proteinExistence type="inferred from homology"/>
<comment type="function">
    <text evidence="1">NDH-1 shuttles electrons from NADH, via FMN and iron-sulfur (Fe-S) centers, to quinones in the respiratory chain. The immediate electron acceptor for the enzyme in this species is believed to be ubiquinone. Couples the redox reaction to proton translocation (for every two electrons transferred, four hydrogen ions are translocated across the cytoplasmic membrane), and thus conserves the redox energy in a proton gradient. This subunit may bind ubiquinone.</text>
</comment>
<comment type="catalytic activity">
    <reaction evidence="1">
        <text>a quinone + NADH + 5 H(+)(in) = a quinol + NAD(+) + 4 H(+)(out)</text>
        <dbReference type="Rhea" id="RHEA:57888"/>
        <dbReference type="ChEBI" id="CHEBI:15378"/>
        <dbReference type="ChEBI" id="CHEBI:24646"/>
        <dbReference type="ChEBI" id="CHEBI:57540"/>
        <dbReference type="ChEBI" id="CHEBI:57945"/>
        <dbReference type="ChEBI" id="CHEBI:132124"/>
    </reaction>
</comment>
<comment type="subunit">
    <text evidence="1">NDH-1 is composed of 14 different subunits. Subunits NuoA, H, J, K, L, M, N constitute the membrane sector of the complex.</text>
</comment>
<comment type="subcellular location">
    <subcellularLocation>
        <location evidence="1">Cell membrane</location>
        <topology evidence="1">Multi-pass membrane protein</topology>
    </subcellularLocation>
</comment>
<comment type="similarity">
    <text evidence="1">Belongs to the complex I subunit 1 family.</text>
</comment>
<reference key="1">
    <citation type="journal article" date="2007" name="Genome Res.">
        <title>Genome characteristics of facultatively symbiotic Frankia sp. strains reflect host range and host plant biogeography.</title>
        <authorList>
            <person name="Normand P."/>
            <person name="Lapierre P."/>
            <person name="Tisa L.S."/>
            <person name="Gogarten J.P."/>
            <person name="Alloisio N."/>
            <person name="Bagnarol E."/>
            <person name="Bassi C.A."/>
            <person name="Berry A.M."/>
            <person name="Bickhart D.M."/>
            <person name="Choisne N."/>
            <person name="Couloux A."/>
            <person name="Cournoyer B."/>
            <person name="Cruveiller S."/>
            <person name="Daubin V."/>
            <person name="Demange N."/>
            <person name="Francino M.P."/>
            <person name="Goltsman E."/>
            <person name="Huang Y."/>
            <person name="Kopp O.R."/>
            <person name="Labarre L."/>
            <person name="Lapidus A."/>
            <person name="Lavire C."/>
            <person name="Marechal J."/>
            <person name="Martinez M."/>
            <person name="Mastronunzio J.E."/>
            <person name="Mullin B.C."/>
            <person name="Niemann J."/>
            <person name="Pujic P."/>
            <person name="Rawnsley T."/>
            <person name="Rouy Z."/>
            <person name="Schenowitz C."/>
            <person name="Sellstedt A."/>
            <person name="Tavares F."/>
            <person name="Tomkins J.P."/>
            <person name="Vallenet D."/>
            <person name="Valverde C."/>
            <person name="Wall L.G."/>
            <person name="Wang Y."/>
            <person name="Medigue C."/>
            <person name="Benson D.R."/>
        </authorList>
    </citation>
    <scope>NUCLEOTIDE SEQUENCE [LARGE SCALE GENOMIC DNA]</scope>
    <source>
        <strain>DSM 45818 / CECT 9043 / HFP020203 / CcI3</strain>
    </source>
</reference>
<accession>Q2JFL3</accession>